<reference key="1">
    <citation type="journal article" date="2000" name="Nature">
        <title>Sequence and analysis of chromosome 1 of the plant Arabidopsis thaliana.</title>
        <authorList>
            <person name="Theologis A."/>
            <person name="Ecker J.R."/>
            <person name="Palm C.J."/>
            <person name="Federspiel N.A."/>
            <person name="Kaul S."/>
            <person name="White O."/>
            <person name="Alonso J."/>
            <person name="Altafi H."/>
            <person name="Araujo R."/>
            <person name="Bowman C.L."/>
            <person name="Brooks S.Y."/>
            <person name="Buehler E."/>
            <person name="Chan A."/>
            <person name="Chao Q."/>
            <person name="Chen H."/>
            <person name="Cheuk R.F."/>
            <person name="Chin C.W."/>
            <person name="Chung M.K."/>
            <person name="Conn L."/>
            <person name="Conway A.B."/>
            <person name="Conway A.R."/>
            <person name="Creasy T.H."/>
            <person name="Dewar K."/>
            <person name="Dunn P."/>
            <person name="Etgu P."/>
            <person name="Feldblyum T.V."/>
            <person name="Feng J.-D."/>
            <person name="Fong B."/>
            <person name="Fujii C.Y."/>
            <person name="Gill J.E."/>
            <person name="Goldsmith A.D."/>
            <person name="Haas B."/>
            <person name="Hansen N.F."/>
            <person name="Hughes B."/>
            <person name="Huizar L."/>
            <person name="Hunter J.L."/>
            <person name="Jenkins J."/>
            <person name="Johnson-Hopson C."/>
            <person name="Khan S."/>
            <person name="Khaykin E."/>
            <person name="Kim C.J."/>
            <person name="Koo H.L."/>
            <person name="Kremenetskaia I."/>
            <person name="Kurtz D.B."/>
            <person name="Kwan A."/>
            <person name="Lam B."/>
            <person name="Langin-Hooper S."/>
            <person name="Lee A."/>
            <person name="Lee J.M."/>
            <person name="Lenz C.A."/>
            <person name="Li J.H."/>
            <person name="Li Y.-P."/>
            <person name="Lin X."/>
            <person name="Liu S.X."/>
            <person name="Liu Z.A."/>
            <person name="Luros J.S."/>
            <person name="Maiti R."/>
            <person name="Marziali A."/>
            <person name="Militscher J."/>
            <person name="Miranda M."/>
            <person name="Nguyen M."/>
            <person name="Nierman W.C."/>
            <person name="Osborne B.I."/>
            <person name="Pai G."/>
            <person name="Peterson J."/>
            <person name="Pham P.K."/>
            <person name="Rizzo M."/>
            <person name="Rooney T."/>
            <person name="Rowley D."/>
            <person name="Sakano H."/>
            <person name="Salzberg S.L."/>
            <person name="Schwartz J.R."/>
            <person name="Shinn P."/>
            <person name="Southwick A.M."/>
            <person name="Sun H."/>
            <person name="Tallon L.J."/>
            <person name="Tambunga G."/>
            <person name="Toriumi M.J."/>
            <person name="Town C.D."/>
            <person name="Utterback T."/>
            <person name="Van Aken S."/>
            <person name="Vaysberg M."/>
            <person name="Vysotskaia V.S."/>
            <person name="Walker M."/>
            <person name="Wu D."/>
            <person name="Yu G."/>
            <person name="Fraser C.M."/>
            <person name="Venter J.C."/>
            <person name="Davis R.W."/>
        </authorList>
    </citation>
    <scope>NUCLEOTIDE SEQUENCE [LARGE SCALE GENOMIC DNA]</scope>
    <source>
        <strain>cv. Columbia</strain>
    </source>
</reference>
<reference key="2">
    <citation type="journal article" date="2017" name="Plant J.">
        <title>Araport11: a complete reannotation of the Arabidopsis thaliana reference genome.</title>
        <authorList>
            <person name="Cheng C.Y."/>
            <person name="Krishnakumar V."/>
            <person name="Chan A.P."/>
            <person name="Thibaud-Nissen F."/>
            <person name="Schobel S."/>
            <person name="Town C.D."/>
        </authorList>
    </citation>
    <scope>GENOME REANNOTATION</scope>
    <source>
        <strain>cv. Columbia</strain>
    </source>
</reference>
<reference key="3">
    <citation type="journal article" date="2003" name="Science">
        <title>Empirical analysis of transcriptional activity in the Arabidopsis genome.</title>
        <authorList>
            <person name="Yamada K."/>
            <person name="Lim J."/>
            <person name="Dale J.M."/>
            <person name="Chen H."/>
            <person name="Shinn P."/>
            <person name="Palm C.J."/>
            <person name="Southwick A.M."/>
            <person name="Wu H.C."/>
            <person name="Kim C.J."/>
            <person name="Nguyen M."/>
            <person name="Pham P.K."/>
            <person name="Cheuk R.F."/>
            <person name="Karlin-Newmann G."/>
            <person name="Liu S.X."/>
            <person name="Lam B."/>
            <person name="Sakano H."/>
            <person name="Wu T."/>
            <person name="Yu G."/>
            <person name="Miranda M."/>
            <person name="Quach H.L."/>
            <person name="Tripp M."/>
            <person name="Chang C.H."/>
            <person name="Lee J.M."/>
            <person name="Toriumi M.J."/>
            <person name="Chan M.M."/>
            <person name="Tang C.C."/>
            <person name="Onodera C.S."/>
            <person name="Deng J.M."/>
            <person name="Akiyama K."/>
            <person name="Ansari Y."/>
            <person name="Arakawa T."/>
            <person name="Banh J."/>
            <person name="Banno F."/>
            <person name="Bowser L."/>
            <person name="Brooks S.Y."/>
            <person name="Carninci P."/>
            <person name="Chao Q."/>
            <person name="Choy N."/>
            <person name="Enju A."/>
            <person name="Goldsmith A.D."/>
            <person name="Gurjal M."/>
            <person name="Hansen N.F."/>
            <person name="Hayashizaki Y."/>
            <person name="Johnson-Hopson C."/>
            <person name="Hsuan V.W."/>
            <person name="Iida K."/>
            <person name="Karnes M."/>
            <person name="Khan S."/>
            <person name="Koesema E."/>
            <person name="Ishida J."/>
            <person name="Jiang P.X."/>
            <person name="Jones T."/>
            <person name="Kawai J."/>
            <person name="Kamiya A."/>
            <person name="Meyers C."/>
            <person name="Nakajima M."/>
            <person name="Narusaka M."/>
            <person name="Seki M."/>
            <person name="Sakurai T."/>
            <person name="Satou M."/>
            <person name="Tamse R."/>
            <person name="Vaysberg M."/>
            <person name="Wallender E.K."/>
            <person name="Wong C."/>
            <person name="Yamamura Y."/>
            <person name="Yuan S."/>
            <person name="Shinozaki K."/>
            <person name="Davis R.W."/>
            <person name="Theologis A."/>
            <person name="Ecker J.R."/>
        </authorList>
    </citation>
    <scope>NUCLEOTIDE SEQUENCE [LARGE SCALE MRNA]</scope>
    <source>
        <strain>cv. Columbia</strain>
    </source>
</reference>
<reference key="4">
    <citation type="journal article" date="1996" name="Plant J.">
        <title>Further progress towards a catalogue of all Arabidopsis genes: analysis of a set of 5000 non-redundant ESTs.</title>
        <authorList>
            <person name="Cooke R."/>
            <person name="Raynal M."/>
            <person name="Laudie M."/>
            <person name="Grellet F."/>
            <person name="Delseny M."/>
            <person name="Morris P.-C."/>
            <person name="Guerrier D."/>
            <person name="Giraudat J."/>
            <person name="Quigley F."/>
            <person name="Clabault G."/>
            <person name="Li Y.-F."/>
            <person name="Mache R."/>
            <person name="Krivitzky M."/>
            <person name="Gy I.J.-J."/>
            <person name="Kreis M."/>
            <person name="Lecharny A."/>
            <person name="Parmentier Y."/>
            <person name="Marbach J."/>
            <person name="Fleck J."/>
            <person name="Clement B."/>
            <person name="Philipps G."/>
            <person name="Herve C."/>
            <person name="Bardet C."/>
            <person name="Tremousaygue D."/>
            <person name="Lescure B."/>
            <person name="Lacomme C."/>
            <person name="Roby D."/>
            <person name="Jourjon M.-F."/>
            <person name="Chabrier P."/>
            <person name="Charpenteau J.-L."/>
            <person name="Desprez T."/>
            <person name="Amselem J."/>
            <person name="Chiapello H."/>
            <person name="Hoefte H."/>
        </authorList>
    </citation>
    <scope>NUCLEOTIDE SEQUENCE [LARGE SCALE MRNA] OF 11-124</scope>
    <source>
        <strain>cv. Columbia</strain>
        <tissue>Leaf</tissue>
    </source>
</reference>
<reference key="5">
    <citation type="journal article" date="2001" name="Plant Physiol.">
        <title>The organization of cytoplasmic ribosomal protein genes in the Arabidopsis genome.</title>
        <authorList>
            <person name="Barakat A."/>
            <person name="Szick-Miranda K."/>
            <person name="Chang I.-F."/>
            <person name="Guyot R."/>
            <person name="Blanc G."/>
            <person name="Cooke R."/>
            <person name="Delseny M."/>
            <person name="Bailey-Serres J."/>
        </authorList>
    </citation>
    <scope>GENE FAMILY ORGANIZATION</scope>
    <scope>NOMENCLATURE</scope>
</reference>
<reference key="6">
    <citation type="journal article" date="2023" name="Plant Cell">
        <title>An updated nomenclature for plant ribosomal protein genes.</title>
        <authorList>
            <person name="Scarpin M.R."/>
            <person name="Busche M."/>
            <person name="Martinez R.E."/>
            <person name="Harper L.C."/>
            <person name="Reiser L."/>
            <person name="Szakonyi D."/>
            <person name="Merchante C."/>
            <person name="Lan T."/>
            <person name="Xiong W."/>
            <person name="Mo B."/>
            <person name="Tang G."/>
            <person name="Chen X."/>
            <person name="Bailey-Serres J."/>
            <person name="Browning K.S."/>
            <person name="Brunkard J.O."/>
        </authorList>
    </citation>
    <scope>NOMENCLATURE</scope>
</reference>
<comment type="alternative products">
    <event type="alternative splicing"/>
    <isoform>
        <id>P51413-1</id>
        <name>1</name>
        <sequence type="displayed"/>
    </isoform>
    <text>A number of isoforms are produced. According to EST sequences.</text>
</comment>
<comment type="similarity">
    <text evidence="3">Belongs to the universal ribosomal protein uL22 family.</text>
</comment>
<feature type="chain" id="PRO_0000125337" description="Large ribosomal subunit protein uL22y">
    <location>
        <begin position="1"/>
        <end position="175"/>
    </location>
</feature>
<feature type="region of interest" description="Disordered" evidence="1">
    <location>
        <begin position="153"/>
        <end position="175"/>
    </location>
</feature>
<feature type="compositionally biased region" description="Basic and acidic residues" evidence="1">
    <location>
        <begin position="153"/>
        <end position="163"/>
    </location>
</feature>
<feature type="sequence conflict" description="In Ref. 4; CAA83960." evidence="3" ref="4">
    <original>K</original>
    <variation>M</variation>
    <location>
        <position position="13"/>
    </location>
</feature>
<feature type="sequence conflict" description="In Ref. 4; CAA83960." evidence="3" ref="4">
    <original>IPF</original>
    <variation>LPS</variation>
    <location>
        <begin position="58"/>
        <end position="60"/>
    </location>
</feature>
<feature type="sequence conflict" description="In Ref. 4; CAA83960." evidence="3" ref="4">
    <original>F</original>
    <variation>V</variation>
    <location>
        <position position="91"/>
    </location>
</feature>
<feature type="sequence conflict" description="In Ref. 4; CAA83960." evidence="3" ref="4">
    <original>L</original>
    <variation>V</variation>
    <location>
        <position position="96"/>
    </location>
</feature>
<feature type="sequence conflict" description="In Ref. 4." evidence="3" ref="4">
    <original>QAA</original>
    <variation>PGR</variation>
    <location>
        <begin position="122"/>
        <end position="124"/>
    </location>
</feature>
<proteinExistence type="evidence at transcript level"/>
<protein>
    <recommendedName>
        <fullName evidence="2">Large ribosomal subunit protein uL22y</fullName>
    </recommendedName>
    <alternativeName>
        <fullName>60S ribosomal protein L17-2</fullName>
    </alternativeName>
</protein>
<accession>P51413</accession>
<accession>O64803</accession>
<dbReference type="EMBL" id="AC004393">
    <property type="protein sequence ID" value="AAC18792.1"/>
    <property type="molecule type" value="Genomic_DNA"/>
</dbReference>
<dbReference type="EMBL" id="CP002684">
    <property type="protein sequence ID" value="AEE34644.1"/>
    <property type="molecule type" value="Genomic_DNA"/>
</dbReference>
<dbReference type="EMBL" id="AY042862">
    <property type="protein sequence ID" value="AAK68802.1"/>
    <property type="molecule type" value="mRNA"/>
</dbReference>
<dbReference type="EMBL" id="AY081524">
    <property type="protein sequence ID" value="AAM10086.1"/>
    <property type="molecule type" value="mRNA"/>
</dbReference>
<dbReference type="EMBL" id="Z33937">
    <property type="protein sequence ID" value="CAA83960.1"/>
    <property type="molecule type" value="mRNA"/>
</dbReference>
<dbReference type="PIR" id="T02163">
    <property type="entry name" value="T02163"/>
</dbReference>
<dbReference type="RefSeq" id="NP_176910.1">
    <molecule id="P51413-1"/>
    <property type="nucleotide sequence ID" value="NM_105410.4"/>
</dbReference>
<dbReference type="SMR" id="P51413"/>
<dbReference type="BioGRID" id="28284">
    <property type="interactions" value="157"/>
</dbReference>
<dbReference type="FunCoup" id="P51413">
    <property type="interactions" value="3369"/>
</dbReference>
<dbReference type="IntAct" id="P51413">
    <property type="interactions" value="2"/>
</dbReference>
<dbReference type="STRING" id="3702.P51413"/>
<dbReference type="PaxDb" id="3702-AT1G67430.1"/>
<dbReference type="EnsemblPlants" id="AT1G67430.1">
    <molecule id="P51413-1"/>
    <property type="protein sequence ID" value="AT1G67430.1"/>
    <property type="gene ID" value="AT1G67430"/>
</dbReference>
<dbReference type="GeneID" id="843063"/>
<dbReference type="Gramene" id="AT1G67430.1">
    <molecule id="P51413-1"/>
    <property type="protein sequence ID" value="AT1G67430.1"/>
    <property type="gene ID" value="AT1G67430"/>
</dbReference>
<dbReference type="KEGG" id="ath:AT1G67430"/>
<dbReference type="Araport" id="AT1G67430"/>
<dbReference type="TAIR" id="AT1G67430"/>
<dbReference type="eggNOG" id="KOG3353">
    <property type="taxonomic scope" value="Eukaryota"/>
</dbReference>
<dbReference type="HOGENOM" id="CLU_083987_0_1_1"/>
<dbReference type="InParanoid" id="P51413"/>
<dbReference type="OMA" id="NTYETAR"/>
<dbReference type="OrthoDB" id="1055068at2759"/>
<dbReference type="PhylomeDB" id="P51413"/>
<dbReference type="CD-CODE" id="4299E36E">
    <property type="entry name" value="Nucleolus"/>
</dbReference>
<dbReference type="PRO" id="PR:P51413"/>
<dbReference type="Proteomes" id="UP000006548">
    <property type="component" value="Chromosome 1"/>
</dbReference>
<dbReference type="ExpressionAtlas" id="P51413">
    <property type="expression patterns" value="baseline and differential"/>
</dbReference>
<dbReference type="GO" id="GO:0022625">
    <property type="term" value="C:cytosolic large ribosomal subunit"/>
    <property type="evidence" value="ECO:0007005"/>
    <property type="project" value="TAIR"/>
</dbReference>
<dbReference type="GO" id="GO:0022626">
    <property type="term" value="C:cytosolic ribosome"/>
    <property type="evidence" value="ECO:0007005"/>
    <property type="project" value="TAIR"/>
</dbReference>
<dbReference type="GO" id="GO:0005739">
    <property type="term" value="C:mitochondrion"/>
    <property type="evidence" value="ECO:0007005"/>
    <property type="project" value="TAIR"/>
</dbReference>
<dbReference type="GO" id="GO:0005730">
    <property type="term" value="C:nucleolus"/>
    <property type="evidence" value="ECO:0007005"/>
    <property type="project" value="TAIR"/>
</dbReference>
<dbReference type="GO" id="GO:0009506">
    <property type="term" value="C:plasmodesma"/>
    <property type="evidence" value="ECO:0007005"/>
    <property type="project" value="TAIR"/>
</dbReference>
<dbReference type="GO" id="GO:0005773">
    <property type="term" value="C:vacuole"/>
    <property type="evidence" value="ECO:0007005"/>
    <property type="project" value="TAIR"/>
</dbReference>
<dbReference type="GO" id="GO:0003729">
    <property type="term" value="F:mRNA binding"/>
    <property type="evidence" value="ECO:0000314"/>
    <property type="project" value="TAIR"/>
</dbReference>
<dbReference type="GO" id="GO:0003735">
    <property type="term" value="F:structural constituent of ribosome"/>
    <property type="evidence" value="ECO:0000314"/>
    <property type="project" value="CAFA"/>
</dbReference>
<dbReference type="GO" id="GO:0006412">
    <property type="term" value="P:translation"/>
    <property type="evidence" value="ECO:0007669"/>
    <property type="project" value="InterPro"/>
</dbReference>
<dbReference type="CDD" id="cd00336">
    <property type="entry name" value="Ribosomal_L22"/>
    <property type="match status" value="1"/>
</dbReference>
<dbReference type="FunFam" id="3.90.470.10:FF:000005">
    <property type="entry name" value="60S ribosomal protein L17"/>
    <property type="match status" value="1"/>
</dbReference>
<dbReference type="Gene3D" id="3.90.470.10">
    <property type="entry name" value="Ribosomal protein L22/L17"/>
    <property type="match status" value="1"/>
</dbReference>
<dbReference type="InterPro" id="IPR001063">
    <property type="entry name" value="Ribosomal_uL22"/>
</dbReference>
<dbReference type="InterPro" id="IPR018260">
    <property type="entry name" value="Ribosomal_uL22_CS"/>
</dbReference>
<dbReference type="InterPro" id="IPR005721">
    <property type="entry name" value="Ribosomal_uL22_euk/arc"/>
</dbReference>
<dbReference type="InterPro" id="IPR036394">
    <property type="entry name" value="Ribosomal_uL22_sf"/>
</dbReference>
<dbReference type="NCBIfam" id="NF003260">
    <property type="entry name" value="PRK04223.1"/>
    <property type="match status" value="1"/>
</dbReference>
<dbReference type="NCBIfam" id="TIGR01038">
    <property type="entry name" value="uL22_arch_euk"/>
    <property type="match status" value="1"/>
</dbReference>
<dbReference type="PANTHER" id="PTHR11593">
    <property type="entry name" value="60S RIBOSOMAL PROTEIN L17"/>
    <property type="match status" value="1"/>
</dbReference>
<dbReference type="PANTHER" id="PTHR11593:SF47">
    <property type="entry name" value="LARGE RIBOSOMAL SUBUNIT PROTEIN UL22Y"/>
    <property type="match status" value="1"/>
</dbReference>
<dbReference type="Pfam" id="PF00237">
    <property type="entry name" value="Ribosomal_L22"/>
    <property type="match status" value="1"/>
</dbReference>
<dbReference type="SUPFAM" id="SSF54843">
    <property type="entry name" value="Ribosomal protein L22"/>
    <property type="match status" value="1"/>
</dbReference>
<dbReference type="PROSITE" id="PS00464">
    <property type="entry name" value="RIBOSOMAL_L22"/>
    <property type="match status" value="1"/>
</dbReference>
<keyword id="KW-0025">Alternative splicing</keyword>
<keyword id="KW-1185">Reference proteome</keyword>
<keyword id="KW-0687">Ribonucleoprotein</keyword>
<keyword id="KW-0689">Ribosomal protein</keyword>
<evidence type="ECO:0000256" key="1">
    <source>
        <dbReference type="SAM" id="MobiDB-lite"/>
    </source>
</evidence>
<evidence type="ECO:0000303" key="2">
    <source>
    </source>
</evidence>
<evidence type="ECO:0000305" key="3"/>
<gene>
    <name type="primary">RPL17B</name>
    <name type="ordered locus">At1g67430</name>
    <name type="ORF">T1F15.11</name>
</gene>
<sequence length="175" mass="19854">MVKYSQEPDNQTKSCKARGSDLRVHFKNTRETAHAIRKLPLIKAKRYLEDVIAHKQAIPFTRFCRGVGRTAQAKNRHSNGQGRWPAKSAQFVLDLLKNAESNAEVKGLDVDALFISHIQVNQAAKQRRRTYRAHGRINPYMSNPCHIELILSEKEEPVKKEPETQLAAKSKKSAA</sequence>
<name>RL172_ARATH</name>
<organism>
    <name type="scientific">Arabidopsis thaliana</name>
    <name type="common">Mouse-ear cress</name>
    <dbReference type="NCBI Taxonomy" id="3702"/>
    <lineage>
        <taxon>Eukaryota</taxon>
        <taxon>Viridiplantae</taxon>
        <taxon>Streptophyta</taxon>
        <taxon>Embryophyta</taxon>
        <taxon>Tracheophyta</taxon>
        <taxon>Spermatophyta</taxon>
        <taxon>Magnoliopsida</taxon>
        <taxon>eudicotyledons</taxon>
        <taxon>Gunneridae</taxon>
        <taxon>Pentapetalae</taxon>
        <taxon>rosids</taxon>
        <taxon>malvids</taxon>
        <taxon>Brassicales</taxon>
        <taxon>Brassicaceae</taxon>
        <taxon>Camelineae</taxon>
        <taxon>Arabidopsis</taxon>
    </lineage>
</organism>